<protein>
    <recommendedName>
        <fullName evidence="1">NADPH dehydrogenase</fullName>
        <ecNumber evidence="1">1.6.99.1</ecNumber>
    </recommendedName>
</protein>
<evidence type="ECO:0000255" key="1">
    <source>
        <dbReference type="HAMAP-Rule" id="MF_01614"/>
    </source>
</evidence>
<accession>A0ALF5</accession>
<comment type="function">
    <text evidence="1">Catalyzes the reduction of the double bond of an array of alpha,beta-unsaturated aldehydes and ketones. It also reduces the nitro group of nitroester and nitroaromatic compounds. It could have a role in detoxification processes.</text>
</comment>
<comment type="catalytic activity">
    <reaction evidence="1">
        <text>A + NADPH + H(+) = AH2 + NADP(+)</text>
        <dbReference type="Rhea" id="RHEA:13149"/>
        <dbReference type="ChEBI" id="CHEBI:13193"/>
        <dbReference type="ChEBI" id="CHEBI:15378"/>
        <dbReference type="ChEBI" id="CHEBI:17499"/>
        <dbReference type="ChEBI" id="CHEBI:57783"/>
        <dbReference type="ChEBI" id="CHEBI:58349"/>
        <dbReference type="EC" id="1.6.99.1"/>
    </reaction>
</comment>
<comment type="cofactor">
    <cofactor evidence="1">
        <name>FMN</name>
        <dbReference type="ChEBI" id="CHEBI:58210"/>
    </cofactor>
</comment>
<comment type="subunit">
    <text evidence="1">Homotetramer.</text>
</comment>
<comment type="similarity">
    <text evidence="1">Belongs to the NADH:flavin oxidoreductase/NADH oxidase family. NamA subfamily.</text>
</comment>
<feature type="chain" id="PRO_1000069458" description="NADPH dehydrogenase">
    <location>
        <begin position="1"/>
        <end position="338"/>
    </location>
</feature>
<feature type="binding site" evidence="1">
    <location>
        <begin position="22"/>
        <end position="25"/>
    </location>
    <ligand>
        <name>FMN</name>
        <dbReference type="ChEBI" id="CHEBI:58210"/>
    </ligand>
</feature>
<feature type="binding site" evidence="1">
    <location>
        <position position="27"/>
    </location>
    <ligand>
        <name>substrate</name>
    </ligand>
</feature>
<feature type="binding site" evidence="1">
    <location>
        <position position="59"/>
    </location>
    <ligand>
        <name>FMN</name>
        <dbReference type="ChEBI" id="CHEBI:58210"/>
    </ligand>
</feature>
<feature type="binding site" evidence="1">
    <location>
        <position position="101"/>
    </location>
    <ligand>
        <name>FMN</name>
        <dbReference type="ChEBI" id="CHEBI:58210"/>
    </ligand>
</feature>
<feature type="binding site" evidence="1">
    <location>
        <begin position="163"/>
        <end position="166"/>
    </location>
    <ligand>
        <name>substrate</name>
    </ligand>
</feature>
<feature type="binding site" evidence="1">
    <location>
        <position position="214"/>
    </location>
    <ligand>
        <name>FMN</name>
        <dbReference type="ChEBI" id="CHEBI:58210"/>
    </ligand>
</feature>
<feature type="binding site" evidence="1">
    <location>
        <begin position="306"/>
        <end position="307"/>
    </location>
    <ligand>
        <name>FMN</name>
        <dbReference type="ChEBI" id="CHEBI:58210"/>
    </ligand>
</feature>
<dbReference type="EC" id="1.6.99.1" evidence="1"/>
<dbReference type="EMBL" id="AM263198">
    <property type="protein sequence ID" value="CAK21837.1"/>
    <property type="molecule type" value="Genomic_DNA"/>
</dbReference>
<dbReference type="RefSeq" id="WP_011703155.1">
    <property type="nucleotide sequence ID" value="NC_008555.1"/>
</dbReference>
<dbReference type="SMR" id="A0ALF5"/>
<dbReference type="STRING" id="386043.lwe2419"/>
<dbReference type="GeneID" id="61190338"/>
<dbReference type="KEGG" id="lwe:lwe2419"/>
<dbReference type="eggNOG" id="COG1902">
    <property type="taxonomic scope" value="Bacteria"/>
</dbReference>
<dbReference type="HOGENOM" id="CLU_012153_2_1_9"/>
<dbReference type="OrthoDB" id="9772736at2"/>
<dbReference type="Proteomes" id="UP000000779">
    <property type="component" value="Chromosome"/>
</dbReference>
<dbReference type="GO" id="GO:0010181">
    <property type="term" value="F:FMN binding"/>
    <property type="evidence" value="ECO:0007669"/>
    <property type="project" value="UniProtKB-UniRule"/>
</dbReference>
<dbReference type="GO" id="GO:0050661">
    <property type="term" value="F:NADP binding"/>
    <property type="evidence" value="ECO:0007669"/>
    <property type="project" value="UniProtKB-UniRule"/>
</dbReference>
<dbReference type="GO" id="GO:0003959">
    <property type="term" value="F:NADPH dehydrogenase activity"/>
    <property type="evidence" value="ECO:0007669"/>
    <property type="project" value="UniProtKB-UniRule"/>
</dbReference>
<dbReference type="GO" id="GO:0009636">
    <property type="term" value="P:response to toxic substance"/>
    <property type="evidence" value="ECO:0007669"/>
    <property type="project" value="UniProtKB-KW"/>
</dbReference>
<dbReference type="CDD" id="cd02932">
    <property type="entry name" value="OYE_YqiM_FMN"/>
    <property type="match status" value="1"/>
</dbReference>
<dbReference type="Gene3D" id="3.20.20.70">
    <property type="entry name" value="Aldolase class I"/>
    <property type="match status" value="1"/>
</dbReference>
<dbReference type="HAMAP" id="MF_01614">
    <property type="entry name" value="NamA"/>
    <property type="match status" value="1"/>
</dbReference>
<dbReference type="InterPro" id="IPR013785">
    <property type="entry name" value="Aldolase_TIM"/>
</dbReference>
<dbReference type="InterPro" id="IPR023663">
    <property type="entry name" value="NADPH_DH_bac"/>
</dbReference>
<dbReference type="InterPro" id="IPR001155">
    <property type="entry name" value="OxRdtase_FMN_N"/>
</dbReference>
<dbReference type="InterPro" id="IPR044152">
    <property type="entry name" value="YqjM-like"/>
</dbReference>
<dbReference type="NCBIfam" id="NF010047">
    <property type="entry name" value="PRK13523.1"/>
    <property type="match status" value="1"/>
</dbReference>
<dbReference type="PANTHER" id="PTHR43303">
    <property type="entry name" value="NADPH DEHYDROGENASE C23G7.10C-RELATED"/>
    <property type="match status" value="1"/>
</dbReference>
<dbReference type="PANTHER" id="PTHR43303:SF4">
    <property type="entry name" value="NADPH DEHYDROGENASE C23G7.10C-RELATED"/>
    <property type="match status" value="1"/>
</dbReference>
<dbReference type="Pfam" id="PF00724">
    <property type="entry name" value="Oxidored_FMN"/>
    <property type="match status" value="1"/>
</dbReference>
<dbReference type="SUPFAM" id="SSF51395">
    <property type="entry name" value="FMN-linked oxidoreductases"/>
    <property type="match status" value="1"/>
</dbReference>
<organism>
    <name type="scientific">Listeria welshimeri serovar 6b (strain ATCC 35897 / DSM 20650 / CCUG 15529 / CIP 8149 / NCTC 11857 / SLCC 5334 / V8)</name>
    <dbReference type="NCBI Taxonomy" id="386043"/>
    <lineage>
        <taxon>Bacteria</taxon>
        <taxon>Bacillati</taxon>
        <taxon>Bacillota</taxon>
        <taxon>Bacilli</taxon>
        <taxon>Bacillales</taxon>
        <taxon>Listeriaceae</taxon>
        <taxon>Listeria</taxon>
    </lineage>
</organism>
<name>NAMA_LISW6</name>
<proteinExistence type="inferred from homology"/>
<sequence>MSKLFSEYKLKDVTLKNRIVMSPMCMYSVENKDGIATDFHFAHYVSRAAGGTGLVILEATAVQEVGRISEFDLGLWNDEQVPALKHLVDGLHSHGAKAGIQLAHAGRKAVLPGEIVAPSAIAYDEKSAKPVELTKEAIKEVVADFKRAAYRAKEAGFDVIEIHAAHGYLIHQFLSPITNRREDNYGGPAGNRYKILSDIIKAVKEVWDGPIIVRVSATDYAHGGLQLEDYIPFAKWMKADGVELIDVSTGGLVNVAPPVFPGYQVPFADEIRRGAGIATGVLGLITRGEQAEEILCNERADLIIIGRELLRNPYFAKDAALSLGETIEGPKQYSRAWK</sequence>
<reference key="1">
    <citation type="journal article" date="2006" name="J. Bacteriol.">
        <title>Whole-genome sequence of Listeria welshimeri reveals common steps in genome reduction with Listeria innocua as compared to Listeria monocytogenes.</title>
        <authorList>
            <person name="Hain T."/>
            <person name="Steinweg C."/>
            <person name="Kuenne C.T."/>
            <person name="Billion A."/>
            <person name="Ghai R."/>
            <person name="Chatterjee S.S."/>
            <person name="Domann E."/>
            <person name="Kaerst U."/>
            <person name="Goesmann A."/>
            <person name="Bekel T."/>
            <person name="Bartels D."/>
            <person name="Kaiser O."/>
            <person name="Meyer F."/>
            <person name="Puehler A."/>
            <person name="Weisshaar B."/>
            <person name="Wehland J."/>
            <person name="Liang C."/>
            <person name="Dandekar T."/>
            <person name="Lampidis R."/>
            <person name="Kreft J."/>
            <person name="Goebel W."/>
            <person name="Chakraborty T."/>
        </authorList>
    </citation>
    <scope>NUCLEOTIDE SEQUENCE [LARGE SCALE GENOMIC DNA]</scope>
    <source>
        <strain>ATCC 35897 / DSM 20650 / CCUG 15529 / CIP 8149 / NCTC 11857 / SLCC 5334 / V8</strain>
    </source>
</reference>
<keyword id="KW-0216">Detoxification</keyword>
<keyword id="KW-0285">Flavoprotein</keyword>
<keyword id="KW-0288">FMN</keyword>
<keyword id="KW-0521">NADP</keyword>
<keyword id="KW-0560">Oxidoreductase</keyword>
<gene>
    <name evidence="1" type="primary">namA</name>
    <name type="ordered locus">lwe2419</name>
</gene>